<sequence length="362" mass="38738">MERITVTLGERSYPITIAAGLFNEPASFLPLKSGDQVMLVTNETLAPLYLDKVRGVLQRAGVNVDSVILPDGERYKSLTVLDTVFTALLKKPHGRDTTLVALGGGVIGDLTGFAAASYQRGVRFIQVPTTLLSQVDSSVGGKTAVNHPLGKNMIGAFYQPASVVVDLDCLKTLPARELASGLAEVIKYGIILDADFFTWLEGNLDALLRLDGPAMAYCIRRCCELKAEVVAADEREAGLRALLNLGHTFGHAIEAEMGYGNWLHGEAVAAGMVMAACTSERLGQFSSADTQRIIALLRRAGLPVNGPREMSAQAYLPHMLRDKKVLAGELRLVLPLAIGKSEVRGGVSHEVVLSAIADCQQA</sequence>
<name>AROB_SALAR</name>
<dbReference type="EC" id="4.2.3.4" evidence="1"/>
<dbReference type="EMBL" id="CP000880">
    <property type="protein sequence ID" value="ABX23918.1"/>
    <property type="molecule type" value="Genomic_DNA"/>
</dbReference>
<dbReference type="SMR" id="A9MMD9"/>
<dbReference type="STRING" id="41514.SARI_04129"/>
<dbReference type="KEGG" id="ses:SARI_04129"/>
<dbReference type="HOGENOM" id="CLU_001201_0_2_6"/>
<dbReference type="UniPathway" id="UPA00053">
    <property type="reaction ID" value="UER00085"/>
</dbReference>
<dbReference type="Proteomes" id="UP000002084">
    <property type="component" value="Chromosome"/>
</dbReference>
<dbReference type="GO" id="GO:0005737">
    <property type="term" value="C:cytoplasm"/>
    <property type="evidence" value="ECO:0007669"/>
    <property type="project" value="UniProtKB-SubCell"/>
</dbReference>
<dbReference type="GO" id="GO:0003856">
    <property type="term" value="F:3-dehydroquinate synthase activity"/>
    <property type="evidence" value="ECO:0007669"/>
    <property type="project" value="UniProtKB-UniRule"/>
</dbReference>
<dbReference type="GO" id="GO:0046872">
    <property type="term" value="F:metal ion binding"/>
    <property type="evidence" value="ECO:0007669"/>
    <property type="project" value="UniProtKB-KW"/>
</dbReference>
<dbReference type="GO" id="GO:0000166">
    <property type="term" value="F:nucleotide binding"/>
    <property type="evidence" value="ECO:0007669"/>
    <property type="project" value="UniProtKB-KW"/>
</dbReference>
<dbReference type="GO" id="GO:0008652">
    <property type="term" value="P:amino acid biosynthetic process"/>
    <property type="evidence" value="ECO:0007669"/>
    <property type="project" value="UniProtKB-KW"/>
</dbReference>
<dbReference type="GO" id="GO:0009073">
    <property type="term" value="P:aromatic amino acid family biosynthetic process"/>
    <property type="evidence" value="ECO:0007669"/>
    <property type="project" value="UniProtKB-KW"/>
</dbReference>
<dbReference type="GO" id="GO:0009423">
    <property type="term" value="P:chorismate biosynthetic process"/>
    <property type="evidence" value="ECO:0007669"/>
    <property type="project" value="UniProtKB-UniRule"/>
</dbReference>
<dbReference type="CDD" id="cd08195">
    <property type="entry name" value="DHQS"/>
    <property type="match status" value="1"/>
</dbReference>
<dbReference type="FunFam" id="1.20.1090.10:FF:000002">
    <property type="entry name" value="3-dehydroquinate synthase"/>
    <property type="match status" value="1"/>
</dbReference>
<dbReference type="FunFam" id="3.40.50.1970:FF:000001">
    <property type="entry name" value="3-dehydroquinate synthase"/>
    <property type="match status" value="1"/>
</dbReference>
<dbReference type="Gene3D" id="3.40.50.1970">
    <property type="match status" value="1"/>
</dbReference>
<dbReference type="Gene3D" id="1.20.1090.10">
    <property type="entry name" value="Dehydroquinate synthase-like - alpha domain"/>
    <property type="match status" value="1"/>
</dbReference>
<dbReference type="HAMAP" id="MF_00110">
    <property type="entry name" value="DHQ_synthase"/>
    <property type="match status" value="1"/>
</dbReference>
<dbReference type="InterPro" id="IPR050071">
    <property type="entry name" value="Dehydroquinate_synthase"/>
</dbReference>
<dbReference type="InterPro" id="IPR016037">
    <property type="entry name" value="DHQ_synth_AroB"/>
</dbReference>
<dbReference type="InterPro" id="IPR030963">
    <property type="entry name" value="DHQ_synth_fam"/>
</dbReference>
<dbReference type="InterPro" id="IPR030960">
    <property type="entry name" value="DHQS/DOIS_N"/>
</dbReference>
<dbReference type="InterPro" id="IPR056179">
    <property type="entry name" value="DHQS_C"/>
</dbReference>
<dbReference type="NCBIfam" id="TIGR01357">
    <property type="entry name" value="aroB"/>
    <property type="match status" value="1"/>
</dbReference>
<dbReference type="PANTHER" id="PTHR43622">
    <property type="entry name" value="3-DEHYDROQUINATE SYNTHASE"/>
    <property type="match status" value="1"/>
</dbReference>
<dbReference type="PANTHER" id="PTHR43622:SF7">
    <property type="entry name" value="3-DEHYDROQUINATE SYNTHASE, CHLOROPLASTIC"/>
    <property type="match status" value="1"/>
</dbReference>
<dbReference type="Pfam" id="PF01761">
    <property type="entry name" value="DHQ_synthase"/>
    <property type="match status" value="1"/>
</dbReference>
<dbReference type="Pfam" id="PF24621">
    <property type="entry name" value="DHQS_C"/>
    <property type="match status" value="1"/>
</dbReference>
<dbReference type="PIRSF" id="PIRSF001455">
    <property type="entry name" value="DHQ_synth"/>
    <property type="match status" value="1"/>
</dbReference>
<dbReference type="SUPFAM" id="SSF56796">
    <property type="entry name" value="Dehydroquinate synthase-like"/>
    <property type="match status" value="1"/>
</dbReference>
<protein>
    <recommendedName>
        <fullName evidence="1">3-dehydroquinate synthase</fullName>
        <shortName evidence="1">DHQS</shortName>
        <ecNumber evidence="1">4.2.3.4</ecNumber>
    </recommendedName>
</protein>
<keyword id="KW-0028">Amino-acid biosynthesis</keyword>
<keyword id="KW-0057">Aromatic amino acid biosynthesis</keyword>
<keyword id="KW-0170">Cobalt</keyword>
<keyword id="KW-0963">Cytoplasm</keyword>
<keyword id="KW-0456">Lyase</keyword>
<keyword id="KW-0479">Metal-binding</keyword>
<keyword id="KW-0520">NAD</keyword>
<keyword id="KW-0547">Nucleotide-binding</keyword>
<keyword id="KW-1185">Reference proteome</keyword>
<keyword id="KW-0862">Zinc</keyword>
<reference key="1">
    <citation type="submission" date="2007-11" db="EMBL/GenBank/DDBJ databases">
        <authorList>
            <consortium name="The Salmonella enterica serovar Arizonae Genome Sequencing Project"/>
            <person name="McClelland M."/>
            <person name="Sanderson E.K."/>
            <person name="Porwollik S."/>
            <person name="Spieth J."/>
            <person name="Clifton W.S."/>
            <person name="Fulton R."/>
            <person name="Chunyan W."/>
            <person name="Wollam A."/>
            <person name="Shah N."/>
            <person name="Pepin K."/>
            <person name="Bhonagiri V."/>
            <person name="Nash W."/>
            <person name="Johnson M."/>
            <person name="Thiruvilangam P."/>
            <person name="Wilson R."/>
        </authorList>
    </citation>
    <scope>NUCLEOTIDE SEQUENCE [LARGE SCALE GENOMIC DNA]</scope>
    <source>
        <strain>ATCC BAA-731 / CDC346-86 / RSK2980</strain>
    </source>
</reference>
<evidence type="ECO:0000255" key="1">
    <source>
        <dbReference type="HAMAP-Rule" id="MF_00110"/>
    </source>
</evidence>
<gene>
    <name evidence="1" type="primary">aroB</name>
    <name type="ordered locus">SARI_04129</name>
</gene>
<proteinExistence type="inferred from homology"/>
<comment type="function">
    <text evidence="1">Catalyzes the conversion of 3-deoxy-D-arabino-heptulosonate 7-phosphate (DAHP) to dehydroquinate (DHQ).</text>
</comment>
<comment type="catalytic activity">
    <reaction evidence="1">
        <text>7-phospho-2-dehydro-3-deoxy-D-arabino-heptonate = 3-dehydroquinate + phosphate</text>
        <dbReference type="Rhea" id="RHEA:21968"/>
        <dbReference type="ChEBI" id="CHEBI:32364"/>
        <dbReference type="ChEBI" id="CHEBI:43474"/>
        <dbReference type="ChEBI" id="CHEBI:58394"/>
        <dbReference type="EC" id="4.2.3.4"/>
    </reaction>
</comment>
<comment type="cofactor">
    <cofactor evidence="1">
        <name>Co(2+)</name>
        <dbReference type="ChEBI" id="CHEBI:48828"/>
    </cofactor>
    <cofactor evidence="1">
        <name>Zn(2+)</name>
        <dbReference type="ChEBI" id="CHEBI:29105"/>
    </cofactor>
    <text evidence="1">Binds 1 divalent metal cation per subunit. Can use either Co(2+) or Zn(2+).</text>
</comment>
<comment type="cofactor">
    <cofactor evidence="1">
        <name>NAD(+)</name>
        <dbReference type="ChEBI" id="CHEBI:57540"/>
    </cofactor>
</comment>
<comment type="pathway">
    <text evidence="1">Metabolic intermediate biosynthesis; chorismate biosynthesis; chorismate from D-erythrose 4-phosphate and phosphoenolpyruvate: step 2/7.</text>
</comment>
<comment type="subcellular location">
    <subcellularLocation>
        <location evidence="1">Cytoplasm</location>
    </subcellularLocation>
</comment>
<comment type="similarity">
    <text evidence="1">Belongs to the sugar phosphate cyclases superfamily. Dehydroquinate synthase family.</text>
</comment>
<accession>A9MMD9</accession>
<feature type="chain" id="PRO_1000094595" description="3-dehydroquinate synthase">
    <location>
        <begin position="1"/>
        <end position="362"/>
    </location>
</feature>
<feature type="binding site" evidence="1">
    <location>
        <begin position="71"/>
        <end position="76"/>
    </location>
    <ligand>
        <name>NAD(+)</name>
        <dbReference type="ChEBI" id="CHEBI:57540"/>
    </ligand>
</feature>
<feature type="binding site" evidence="1">
    <location>
        <begin position="105"/>
        <end position="109"/>
    </location>
    <ligand>
        <name>NAD(+)</name>
        <dbReference type="ChEBI" id="CHEBI:57540"/>
    </ligand>
</feature>
<feature type="binding site" evidence="1">
    <location>
        <begin position="129"/>
        <end position="130"/>
    </location>
    <ligand>
        <name>NAD(+)</name>
        <dbReference type="ChEBI" id="CHEBI:57540"/>
    </ligand>
</feature>
<feature type="binding site" evidence="1">
    <location>
        <position position="142"/>
    </location>
    <ligand>
        <name>NAD(+)</name>
        <dbReference type="ChEBI" id="CHEBI:57540"/>
    </ligand>
</feature>
<feature type="binding site" evidence="1">
    <location>
        <position position="151"/>
    </location>
    <ligand>
        <name>NAD(+)</name>
        <dbReference type="ChEBI" id="CHEBI:57540"/>
    </ligand>
</feature>
<feature type="binding site" evidence="1">
    <location>
        <begin position="169"/>
        <end position="172"/>
    </location>
    <ligand>
        <name>NAD(+)</name>
        <dbReference type="ChEBI" id="CHEBI:57540"/>
    </ligand>
</feature>
<feature type="binding site" evidence="1">
    <location>
        <position position="184"/>
    </location>
    <ligand>
        <name>Zn(2+)</name>
        <dbReference type="ChEBI" id="CHEBI:29105"/>
    </ligand>
</feature>
<feature type="binding site" evidence="1">
    <location>
        <position position="247"/>
    </location>
    <ligand>
        <name>Zn(2+)</name>
        <dbReference type="ChEBI" id="CHEBI:29105"/>
    </ligand>
</feature>
<feature type="binding site" evidence="1">
    <location>
        <position position="264"/>
    </location>
    <ligand>
        <name>Zn(2+)</name>
        <dbReference type="ChEBI" id="CHEBI:29105"/>
    </ligand>
</feature>
<organism>
    <name type="scientific">Salmonella arizonae (strain ATCC BAA-731 / CDC346-86 / RSK2980)</name>
    <dbReference type="NCBI Taxonomy" id="41514"/>
    <lineage>
        <taxon>Bacteria</taxon>
        <taxon>Pseudomonadati</taxon>
        <taxon>Pseudomonadota</taxon>
        <taxon>Gammaproteobacteria</taxon>
        <taxon>Enterobacterales</taxon>
        <taxon>Enterobacteriaceae</taxon>
        <taxon>Salmonella</taxon>
    </lineage>
</organism>